<feature type="chain" id="PRO_1000128250" description="4-hydroxythreonine-4-phosphate dehydrogenase">
    <location>
        <begin position="1"/>
        <end position="336"/>
    </location>
</feature>
<feature type="binding site" evidence="1">
    <location>
        <position position="142"/>
    </location>
    <ligand>
        <name>substrate</name>
    </ligand>
</feature>
<feature type="binding site" evidence="1">
    <location>
        <position position="143"/>
    </location>
    <ligand>
        <name>substrate</name>
    </ligand>
</feature>
<feature type="binding site" evidence="1">
    <location>
        <position position="172"/>
    </location>
    <ligand>
        <name>a divalent metal cation</name>
        <dbReference type="ChEBI" id="CHEBI:60240"/>
        <note>ligand shared between dimeric partners</note>
    </ligand>
</feature>
<feature type="binding site" evidence="1">
    <location>
        <position position="217"/>
    </location>
    <ligand>
        <name>a divalent metal cation</name>
        <dbReference type="ChEBI" id="CHEBI:60240"/>
        <note>ligand shared between dimeric partners</note>
    </ligand>
</feature>
<feature type="binding site" evidence="1">
    <location>
        <position position="274"/>
    </location>
    <ligand>
        <name>a divalent metal cation</name>
        <dbReference type="ChEBI" id="CHEBI:60240"/>
        <note>ligand shared between dimeric partners</note>
    </ligand>
</feature>
<feature type="binding site" evidence="1">
    <location>
        <position position="282"/>
    </location>
    <ligand>
        <name>substrate</name>
    </ligand>
</feature>
<feature type="binding site" evidence="1">
    <location>
        <position position="291"/>
    </location>
    <ligand>
        <name>substrate</name>
    </ligand>
</feature>
<feature type="binding site" evidence="1">
    <location>
        <position position="300"/>
    </location>
    <ligand>
        <name>substrate</name>
    </ligand>
</feature>
<sequence>MNTPKPQIAITMGDPCGVGPEIIVAALSDPAIRSACKPLVLGDRRAMQRALTVCNSPLELITVSSPAEAADLPDSVIPLLELSSLANTDIDYGKPSELSGDAVYRYIRRAAELCLTGEVAAMATAPISKEAMHRAGHHYPGHTELLAELCRCDEFVMMLAGDVLRVALVTIHEALAHVPALISTEQVLKTIRVTANGVAPLCGNRSPRIAVLALNPHCGEGGMFGSEEADAIIPAITAAQSEGLDVAGPFSADTFFHFAVQEPAPYDAVVAMYHDQGLIPLKMRHFDDGINITLGLPIIRTSVDHGTAYNLAGTGTASATSMKASIRIAAKLAATR</sequence>
<keyword id="KW-0170">Cobalt</keyword>
<keyword id="KW-0963">Cytoplasm</keyword>
<keyword id="KW-0460">Magnesium</keyword>
<keyword id="KW-0479">Metal-binding</keyword>
<keyword id="KW-0520">NAD</keyword>
<keyword id="KW-0521">NADP</keyword>
<keyword id="KW-0560">Oxidoreductase</keyword>
<keyword id="KW-0664">Pyridoxine biosynthesis</keyword>
<keyword id="KW-1185">Reference proteome</keyword>
<keyword id="KW-0862">Zinc</keyword>
<reference key="1">
    <citation type="submission" date="2008-05" db="EMBL/GenBank/DDBJ databases">
        <title>Complete sequence of chromosome of Geobacter lovleyi SZ.</title>
        <authorList>
            <consortium name="US DOE Joint Genome Institute"/>
            <person name="Lucas S."/>
            <person name="Copeland A."/>
            <person name="Lapidus A."/>
            <person name="Glavina del Rio T."/>
            <person name="Dalin E."/>
            <person name="Tice H."/>
            <person name="Bruce D."/>
            <person name="Goodwin L."/>
            <person name="Pitluck S."/>
            <person name="Chertkov O."/>
            <person name="Meincke L."/>
            <person name="Brettin T."/>
            <person name="Detter J.C."/>
            <person name="Han C."/>
            <person name="Tapia R."/>
            <person name="Kuske C.R."/>
            <person name="Schmutz J."/>
            <person name="Larimer F."/>
            <person name="Land M."/>
            <person name="Hauser L."/>
            <person name="Kyrpides N."/>
            <person name="Mikhailova N."/>
            <person name="Sung Y."/>
            <person name="Fletcher K.E."/>
            <person name="Ritalahti K.M."/>
            <person name="Loeffler F.E."/>
            <person name="Richardson P."/>
        </authorList>
    </citation>
    <scope>NUCLEOTIDE SEQUENCE [LARGE SCALE GENOMIC DNA]</scope>
    <source>
        <strain>ATCC BAA-1151 / DSM 17278 / SZ</strain>
    </source>
</reference>
<organism>
    <name type="scientific">Trichlorobacter lovleyi (strain ATCC BAA-1151 / DSM 17278 / SZ)</name>
    <name type="common">Geobacter lovleyi</name>
    <dbReference type="NCBI Taxonomy" id="398767"/>
    <lineage>
        <taxon>Bacteria</taxon>
        <taxon>Pseudomonadati</taxon>
        <taxon>Thermodesulfobacteriota</taxon>
        <taxon>Desulfuromonadia</taxon>
        <taxon>Geobacterales</taxon>
        <taxon>Geobacteraceae</taxon>
        <taxon>Trichlorobacter</taxon>
    </lineage>
</organism>
<gene>
    <name evidence="1" type="primary">pdxA</name>
    <name type="ordered locus">Glov_3452</name>
</gene>
<dbReference type="EC" id="1.1.1.262" evidence="1"/>
<dbReference type="EMBL" id="CP001089">
    <property type="protein sequence ID" value="ACD97155.1"/>
    <property type="molecule type" value="Genomic_DNA"/>
</dbReference>
<dbReference type="RefSeq" id="WP_012471475.1">
    <property type="nucleotide sequence ID" value="NC_010814.1"/>
</dbReference>
<dbReference type="SMR" id="B3E252"/>
<dbReference type="STRING" id="398767.Glov_3452"/>
<dbReference type="KEGG" id="glo:Glov_3452"/>
<dbReference type="eggNOG" id="COG1995">
    <property type="taxonomic scope" value="Bacteria"/>
</dbReference>
<dbReference type="HOGENOM" id="CLU_040168_0_0_7"/>
<dbReference type="OrthoDB" id="9801783at2"/>
<dbReference type="UniPathway" id="UPA00244">
    <property type="reaction ID" value="UER00312"/>
</dbReference>
<dbReference type="Proteomes" id="UP000002420">
    <property type="component" value="Chromosome"/>
</dbReference>
<dbReference type="GO" id="GO:0005737">
    <property type="term" value="C:cytoplasm"/>
    <property type="evidence" value="ECO:0007669"/>
    <property type="project" value="UniProtKB-SubCell"/>
</dbReference>
<dbReference type="GO" id="GO:0050570">
    <property type="term" value="F:4-hydroxythreonine-4-phosphate dehydrogenase activity"/>
    <property type="evidence" value="ECO:0007669"/>
    <property type="project" value="UniProtKB-UniRule"/>
</dbReference>
<dbReference type="GO" id="GO:0046872">
    <property type="term" value="F:metal ion binding"/>
    <property type="evidence" value="ECO:0007669"/>
    <property type="project" value="UniProtKB-UniRule"/>
</dbReference>
<dbReference type="GO" id="GO:0051287">
    <property type="term" value="F:NAD binding"/>
    <property type="evidence" value="ECO:0007669"/>
    <property type="project" value="InterPro"/>
</dbReference>
<dbReference type="GO" id="GO:0042823">
    <property type="term" value="P:pyridoxal phosphate biosynthetic process"/>
    <property type="evidence" value="ECO:0007669"/>
    <property type="project" value="UniProtKB-UniRule"/>
</dbReference>
<dbReference type="GO" id="GO:0008615">
    <property type="term" value="P:pyridoxine biosynthetic process"/>
    <property type="evidence" value="ECO:0007669"/>
    <property type="project" value="UniProtKB-UniRule"/>
</dbReference>
<dbReference type="Gene3D" id="3.40.718.10">
    <property type="entry name" value="Isopropylmalate Dehydrogenase"/>
    <property type="match status" value="1"/>
</dbReference>
<dbReference type="HAMAP" id="MF_00536">
    <property type="entry name" value="PdxA"/>
    <property type="match status" value="1"/>
</dbReference>
<dbReference type="InterPro" id="IPR037510">
    <property type="entry name" value="PdxA"/>
</dbReference>
<dbReference type="InterPro" id="IPR005255">
    <property type="entry name" value="PdxA_fam"/>
</dbReference>
<dbReference type="NCBIfam" id="TIGR00557">
    <property type="entry name" value="pdxA"/>
    <property type="match status" value="1"/>
</dbReference>
<dbReference type="PANTHER" id="PTHR30004">
    <property type="entry name" value="4-HYDROXYTHREONINE-4-PHOSPHATE DEHYDROGENASE"/>
    <property type="match status" value="1"/>
</dbReference>
<dbReference type="PANTHER" id="PTHR30004:SF6">
    <property type="entry name" value="D-THREONATE 4-PHOSPHATE DEHYDROGENASE"/>
    <property type="match status" value="1"/>
</dbReference>
<dbReference type="Pfam" id="PF04166">
    <property type="entry name" value="PdxA"/>
    <property type="match status" value="1"/>
</dbReference>
<dbReference type="SUPFAM" id="SSF53659">
    <property type="entry name" value="Isocitrate/Isopropylmalate dehydrogenase-like"/>
    <property type="match status" value="1"/>
</dbReference>
<protein>
    <recommendedName>
        <fullName evidence="1">4-hydroxythreonine-4-phosphate dehydrogenase</fullName>
        <ecNumber evidence="1">1.1.1.262</ecNumber>
    </recommendedName>
    <alternativeName>
        <fullName evidence="1">4-(phosphohydroxy)-L-threonine dehydrogenase</fullName>
    </alternativeName>
</protein>
<name>PDXA_TRIL1</name>
<evidence type="ECO:0000255" key="1">
    <source>
        <dbReference type="HAMAP-Rule" id="MF_00536"/>
    </source>
</evidence>
<accession>B3E252</accession>
<comment type="function">
    <text evidence="1">Catalyzes the NAD(P)-dependent oxidation of 4-(phosphooxy)-L-threonine (HTP) into 2-amino-3-oxo-4-(phosphooxy)butyric acid which spontaneously decarboxylates to form 3-amino-2-oxopropyl phosphate (AHAP).</text>
</comment>
<comment type="catalytic activity">
    <reaction evidence="1">
        <text>4-(phosphooxy)-L-threonine + NAD(+) = 3-amino-2-oxopropyl phosphate + CO2 + NADH</text>
        <dbReference type="Rhea" id="RHEA:32275"/>
        <dbReference type="ChEBI" id="CHEBI:16526"/>
        <dbReference type="ChEBI" id="CHEBI:57279"/>
        <dbReference type="ChEBI" id="CHEBI:57540"/>
        <dbReference type="ChEBI" id="CHEBI:57945"/>
        <dbReference type="ChEBI" id="CHEBI:58452"/>
        <dbReference type="EC" id="1.1.1.262"/>
    </reaction>
</comment>
<comment type="cofactor">
    <cofactor evidence="1">
        <name>Zn(2+)</name>
        <dbReference type="ChEBI" id="CHEBI:29105"/>
    </cofactor>
    <cofactor evidence="1">
        <name>Mg(2+)</name>
        <dbReference type="ChEBI" id="CHEBI:18420"/>
    </cofactor>
    <cofactor evidence="1">
        <name>Co(2+)</name>
        <dbReference type="ChEBI" id="CHEBI:48828"/>
    </cofactor>
    <text evidence="1">Binds 1 divalent metal cation per subunit. Can use ions such as Zn(2+), Mg(2+) or Co(2+).</text>
</comment>
<comment type="pathway">
    <text evidence="1">Cofactor biosynthesis; pyridoxine 5'-phosphate biosynthesis; pyridoxine 5'-phosphate from D-erythrose 4-phosphate: step 4/5.</text>
</comment>
<comment type="subunit">
    <text evidence="1">Homodimer.</text>
</comment>
<comment type="subcellular location">
    <subcellularLocation>
        <location evidence="1">Cytoplasm</location>
    </subcellularLocation>
</comment>
<comment type="miscellaneous">
    <text evidence="1">The active site is located at the dimer interface.</text>
</comment>
<comment type="similarity">
    <text evidence="1">Belongs to the PdxA family.</text>
</comment>
<proteinExistence type="inferred from homology"/>